<proteinExistence type="inferred from homology"/>
<feature type="peptide" id="PRO_0000345077" description="Phenol-soluble modulin alpha 4 peptide">
    <location>
        <begin position="1"/>
        <end position="20"/>
    </location>
</feature>
<organism>
    <name type="scientific">Staphylococcus aureus (strain COL)</name>
    <dbReference type="NCBI Taxonomy" id="93062"/>
    <lineage>
        <taxon>Bacteria</taxon>
        <taxon>Bacillati</taxon>
        <taxon>Bacillota</taxon>
        <taxon>Bacilli</taxon>
        <taxon>Bacillales</taxon>
        <taxon>Staphylococcaceae</taxon>
        <taxon>Staphylococcus</taxon>
    </lineage>
</organism>
<gene>
    <name type="primary">psmA4</name>
    <name type="ordered locus">SACOL0493.1</name>
</gene>
<sequence>MAIVGTIIKIIKAIIDIFAK</sequence>
<name>PSMA4_STAAC</name>
<keyword id="KW-0204">Cytolysis</keyword>
<keyword id="KW-0843">Virulence</keyword>
<accession>P0C821</accession>
<dbReference type="EMBL" id="CP000046">
    <property type="status" value="NOT_ANNOTATED_CDS"/>
    <property type="molecule type" value="Genomic_DNA"/>
</dbReference>
<dbReference type="SMR" id="P0C821"/>
<dbReference type="Proteomes" id="UP000000530">
    <property type="component" value="Chromosome"/>
</dbReference>
<dbReference type="GO" id="GO:0031640">
    <property type="term" value="P:killing of cells of another organism"/>
    <property type="evidence" value="ECO:0007669"/>
    <property type="project" value="UniProtKB-KW"/>
</dbReference>
<dbReference type="InterPro" id="IPR031429">
    <property type="entry name" value="PSM_alpha"/>
</dbReference>
<dbReference type="Pfam" id="PF17063">
    <property type="entry name" value="PSMalpha"/>
    <property type="match status" value="1"/>
</dbReference>
<reference key="1">
    <citation type="journal article" date="2005" name="J. Bacteriol.">
        <title>Insights on evolution of virulence and resistance from the complete genome analysis of an early methicillin-resistant Staphylococcus aureus strain and a biofilm-producing methicillin-resistant Staphylococcus epidermidis strain.</title>
        <authorList>
            <person name="Gill S.R."/>
            <person name="Fouts D.E."/>
            <person name="Archer G.L."/>
            <person name="Mongodin E.F."/>
            <person name="DeBoy R.T."/>
            <person name="Ravel J."/>
            <person name="Paulsen I.T."/>
            <person name="Kolonay J.F."/>
            <person name="Brinkac L.M."/>
            <person name="Beanan M.J."/>
            <person name="Dodson R.J."/>
            <person name="Daugherty S.C."/>
            <person name="Madupu R."/>
            <person name="Angiuoli S.V."/>
            <person name="Durkin A.S."/>
            <person name="Haft D.H."/>
            <person name="Vamathevan J.J."/>
            <person name="Khouri H."/>
            <person name="Utterback T.R."/>
            <person name="Lee C."/>
            <person name="Dimitrov G."/>
            <person name="Jiang L."/>
            <person name="Qin H."/>
            <person name="Weidman J."/>
            <person name="Tran K."/>
            <person name="Kang K.H."/>
            <person name="Hance I.R."/>
            <person name="Nelson K.E."/>
            <person name="Fraser C.M."/>
        </authorList>
    </citation>
    <scope>NUCLEOTIDE SEQUENCE [LARGE SCALE GENOMIC DNA]</scope>
    <source>
        <strain>COL</strain>
    </source>
</reference>
<protein>
    <recommendedName>
        <fullName>Phenol-soluble modulin alpha 4 peptide</fullName>
    </recommendedName>
</protein>
<evidence type="ECO:0000250" key="1">
    <source>
        <dbReference type="UniProtKB" id="A9JX08"/>
    </source>
</evidence>
<evidence type="ECO:0000305" key="2"/>
<comment type="function">
    <text evidence="1">Peptide which can recruit, activate and subsequently lyse human neutrophils, thus eliminating the main cellular defense against infection.</text>
</comment>
<comment type="similarity">
    <text evidence="2">Belongs to the phenol-soluble modulin alpha peptides family.</text>
</comment>